<comment type="function">
    <text evidence="1">This protein is an auxiliary protein of DNA polymerase delta and is involved in the control of eukaryotic DNA replication by increasing the polymerase's processibility during elongation of the leading strand.</text>
</comment>
<comment type="subunit">
    <text evidence="1 2">Homotrimer. Forms a complex with activator 1 heteropentamer in the presence of ATP (By similarity). Component of the replisome complex (By similarity).</text>
</comment>
<comment type="subcellular location">
    <subcellularLocation>
        <location evidence="2">Nucleus</location>
    </subcellularLocation>
</comment>
<comment type="PTM">
    <text evidence="1">Monoubiquitinated by the ube2b-rad18 complex on Lys-164. Monoubiquitination at Lys-164 also takes place in undamaged proliferating cells, and is mediated by the dcx(dtl) complex, leading to enhance PCNA-dependent translesion DNA synthesis (By similarity).</text>
</comment>
<comment type="similarity">
    <text evidence="4">Belongs to the PCNA family.</text>
</comment>
<protein>
    <recommendedName>
        <fullName>Proliferating cell nuclear antigen</fullName>
        <shortName>PCNA</shortName>
    </recommendedName>
</protein>
<evidence type="ECO:0000250" key="1"/>
<evidence type="ECO:0000250" key="2">
    <source>
        <dbReference type="UniProtKB" id="P12004"/>
    </source>
</evidence>
<evidence type="ECO:0000255" key="3"/>
<evidence type="ECO:0000305" key="4"/>
<sequence length="260" mass="28689">MFEARLVQGSILKKVLEALKDLITEACWDVSSSGISLQSMDSSHVSLVQLTLRHDGFDSYRCDRNLAMGVNLSSMSKILKCAGNEDIITLRAEDNADTLALVFETLNQEKVSDYEMKLMDLDVEQLGIPEQEYSCVVKMPSGEFARICRDLSQIGDAVMISCAKDGVKFSASGELGTGNIKLSQTSNVDKEDEAVTIEMNEPVQLIFALNYLNFFTKATPLSKTVTLSMSADIPLVVEYKIADMGHIKYYLAPKIDEEAS</sequence>
<keyword id="KW-0235">DNA replication</keyword>
<keyword id="KW-0238">DNA-binding</keyword>
<keyword id="KW-1017">Isopeptide bond</keyword>
<keyword id="KW-0539">Nucleus</keyword>
<keyword id="KW-1185">Reference proteome</keyword>
<keyword id="KW-0832">Ubl conjugation</keyword>
<feature type="chain" id="PRO_0000149166" description="Proliferating cell nuclear antigen">
    <location>
        <begin position="1"/>
        <end position="260"/>
    </location>
</feature>
<feature type="DNA-binding region" evidence="3">
    <location>
        <begin position="61"/>
        <end position="80"/>
    </location>
</feature>
<feature type="cross-link" description="Glycyl lysine isopeptide (Lys-Gly) (interchain with G-Cter in ubiquitin)" evidence="1">
    <location>
        <position position="164"/>
    </location>
</feature>
<dbReference type="EMBL" id="AY677117">
    <property type="protein sequence ID" value="AAT78432.1"/>
    <property type="molecule type" value="mRNA"/>
</dbReference>
<dbReference type="RefSeq" id="NP_001273253.1">
    <property type="nucleotide sequence ID" value="NM_001286324.1"/>
</dbReference>
<dbReference type="SMR" id="Q6B6N4"/>
<dbReference type="STRING" id="8153.ENSHBUP00000029821"/>
<dbReference type="Ensembl" id="ENSHBUT00000020260.1">
    <property type="protein sequence ID" value="ENSHBUP00000029821.1"/>
    <property type="gene ID" value="ENSHBUG00000000420.1"/>
</dbReference>
<dbReference type="GeneID" id="102307523"/>
<dbReference type="CTD" id="5111"/>
<dbReference type="GeneTree" id="ENSGT00390000004965"/>
<dbReference type="OMA" id="EMKLINM"/>
<dbReference type="OrthoDB" id="3009at1489911"/>
<dbReference type="Proteomes" id="UP000264840">
    <property type="component" value="Unplaced"/>
</dbReference>
<dbReference type="GO" id="GO:0043626">
    <property type="term" value="C:PCNA complex"/>
    <property type="evidence" value="ECO:0007669"/>
    <property type="project" value="TreeGrafter"/>
</dbReference>
<dbReference type="GO" id="GO:0070557">
    <property type="term" value="C:PCNA-p21 complex"/>
    <property type="evidence" value="ECO:0000250"/>
    <property type="project" value="UniProtKB"/>
</dbReference>
<dbReference type="GO" id="GO:0003677">
    <property type="term" value="F:DNA binding"/>
    <property type="evidence" value="ECO:0007669"/>
    <property type="project" value="UniProtKB-KW"/>
</dbReference>
<dbReference type="GO" id="GO:0030337">
    <property type="term" value="F:DNA polymerase processivity factor activity"/>
    <property type="evidence" value="ECO:0007669"/>
    <property type="project" value="InterPro"/>
</dbReference>
<dbReference type="GO" id="GO:0006272">
    <property type="term" value="P:leading strand elongation"/>
    <property type="evidence" value="ECO:0007669"/>
    <property type="project" value="TreeGrafter"/>
</dbReference>
<dbReference type="GO" id="GO:0006298">
    <property type="term" value="P:mismatch repair"/>
    <property type="evidence" value="ECO:0007669"/>
    <property type="project" value="TreeGrafter"/>
</dbReference>
<dbReference type="GO" id="GO:0006275">
    <property type="term" value="P:regulation of DNA replication"/>
    <property type="evidence" value="ECO:0007669"/>
    <property type="project" value="InterPro"/>
</dbReference>
<dbReference type="GO" id="GO:0014823">
    <property type="term" value="P:response to activity"/>
    <property type="evidence" value="ECO:0007669"/>
    <property type="project" value="Ensembl"/>
</dbReference>
<dbReference type="GO" id="GO:0009617">
    <property type="term" value="P:response to bacterium"/>
    <property type="evidence" value="ECO:0007669"/>
    <property type="project" value="Ensembl"/>
</dbReference>
<dbReference type="GO" id="GO:0019985">
    <property type="term" value="P:translesion synthesis"/>
    <property type="evidence" value="ECO:0000250"/>
    <property type="project" value="UniProtKB"/>
</dbReference>
<dbReference type="CDD" id="cd00577">
    <property type="entry name" value="PCNA"/>
    <property type="match status" value="1"/>
</dbReference>
<dbReference type="FunFam" id="3.10.150.10:FF:000006">
    <property type="entry name" value="Proliferating cell nuclear antigen"/>
    <property type="match status" value="1"/>
</dbReference>
<dbReference type="FunFam" id="3.10.150.10:FF:000008">
    <property type="entry name" value="Proliferating cell nuclear antigen"/>
    <property type="match status" value="1"/>
</dbReference>
<dbReference type="FunFam" id="3.70.10.10:FF:000001">
    <property type="entry name" value="Proliferating cell nuclear antigen"/>
    <property type="match status" value="1"/>
</dbReference>
<dbReference type="Gene3D" id="3.10.150.10">
    <property type="entry name" value="DNA Polymerase III, subunit A, domain 2"/>
    <property type="match status" value="2"/>
</dbReference>
<dbReference type="HAMAP" id="MF_00317">
    <property type="entry name" value="DNApol_clamp_arch"/>
    <property type="match status" value="1"/>
</dbReference>
<dbReference type="InterPro" id="IPR046938">
    <property type="entry name" value="DNA_clamp_sf"/>
</dbReference>
<dbReference type="InterPro" id="IPR000730">
    <property type="entry name" value="Pr_cel_nuc_antig"/>
</dbReference>
<dbReference type="InterPro" id="IPR022649">
    <property type="entry name" value="Pr_cel_nuc_antig_C"/>
</dbReference>
<dbReference type="InterPro" id="IPR022659">
    <property type="entry name" value="Pr_cel_nuc_antig_CS"/>
</dbReference>
<dbReference type="InterPro" id="IPR022648">
    <property type="entry name" value="Pr_cel_nuc_antig_N"/>
</dbReference>
<dbReference type="NCBIfam" id="TIGR00590">
    <property type="entry name" value="pcna"/>
    <property type="match status" value="1"/>
</dbReference>
<dbReference type="PANTHER" id="PTHR11352">
    <property type="entry name" value="PROLIFERATING CELL NUCLEAR ANTIGEN"/>
    <property type="match status" value="1"/>
</dbReference>
<dbReference type="PANTHER" id="PTHR11352:SF0">
    <property type="entry name" value="PROLIFERATING CELL NUCLEAR ANTIGEN"/>
    <property type="match status" value="1"/>
</dbReference>
<dbReference type="Pfam" id="PF02747">
    <property type="entry name" value="PCNA_C"/>
    <property type="match status" value="1"/>
</dbReference>
<dbReference type="Pfam" id="PF00705">
    <property type="entry name" value="PCNA_N"/>
    <property type="match status" value="1"/>
</dbReference>
<dbReference type="PRINTS" id="PR00339">
    <property type="entry name" value="PCNACYCLIN"/>
</dbReference>
<dbReference type="SUPFAM" id="SSF55979">
    <property type="entry name" value="DNA clamp"/>
    <property type="match status" value="2"/>
</dbReference>
<dbReference type="PROSITE" id="PS01251">
    <property type="entry name" value="PCNA_1"/>
    <property type="match status" value="1"/>
</dbReference>
<dbReference type="PROSITE" id="PS00293">
    <property type="entry name" value="PCNA_2"/>
    <property type="match status" value="1"/>
</dbReference>
<gene>
    <name type="primary">pcna</name>
</gene>
<name>PCNA_HAPBU</name>
<proteinExistence type="evidence at transcript level"/>
<accession>Q6B6N4</accession>
<reference key="1">
    <citation type="submission" date="2004-07" db="EMBL/GenBank/DDBJ databases">
        <title>Establishment of a novel auto-regression algorithm for directly computing efficiency from individual reaction provides sensitive, accurate, and platform independent analysis for real-time PCR.</title>
        <authorList>
            <person name="Zhao S."/>
            <person name="Fernald R.D."/>
        </authorList>
    </citation>
    <scope>NUCLEOTIDE SEQUENCE [MRNA]</scope>
    <source>
        <tissue>Retina</tissue>
    </source>
</reference>
<organism>
    <name type="scientific">Haplochromis burtoni</name>
    <name type="common">Burton's mouthbrooder</name>
    <name type="synonym">Chromis burtoni</name>
    <dbReference type="NCBI Taxonomy" id="8153"/>
    <lineage>
        <taxon>Eukaryota</taxon>
        <taxon>Metazoa</taxon>
        <taxon>Chordata</taxon>
        <taxon>Craniata</taxon>
        <taxon>Vertebrata</taxon>
        <taxon>Euteleostomi</taxon>
        <taxon>Actinopterygii</taxon>
        <taxon>Neopterygii</taxon>
        <taxon>Teleostei</taxon>
        <taxon>Neoteleostei</taxon>
        <taxon>Acanthomorphata</taxon>
        <taxon>Ovalentaria</taxon>
        <taxon>Cichlomorphae</taxon>
        <taxon>Cichliformes</taxon>
        <taxon>Cichlidae</taxon>
        <taxon>African cichlids</taxon>
        <taxon>Pseudocrenilabrinae</taxon>
        <taxon>Haplochromini</taxon>
        <taxon>Haplochromis</taxon>
    </lineage>
</organism>